<accession>C8VQ97</accession>
<comment type="function">
    <text evidence="3">MFS-type transporter; part of the gene cluster B that mediates the biosynthesis of austinol and dehydroaustinol, two fungal meroterpenoids.</text>
</comment>
<comment type="subcellular location">
    <subcellularLocation>
        <location evidence="1">Membrane</location>
        <topology evidence="1">Multi-pass membrane protein</topology>
    </subcellularLocation>
</comment>
<comment type="miscellaneous">
    <text evidence="6">In A.calidoustus, the austinoid gene cluster lies on a contiguous DNA region, while clusters from E.nidulans and P.brasilianum are split in their respective genomes. Genetic rearrangements provoked variability among the clusters and E.nidulans produces the least number of austionoid derivatives with the end products austinol and dehydroaustinol, while P.brasilianum can produce until acetoxydehydroaustin, and A.calidoustus produces the highest number of identified derivatives.</text>
</comment>
<comment type="similarity">
    <text evidence="5">Belongs to the major facilitator superfamily. TCR/Tet family.</text>
</comment>
<protein>
    <recommendedName>
        <fullName evidence="4">MFS-type transporter ausY</fullName>
    </recommendedName>
    <alternativeName>
        <fullName evidence="4">Austinoid biosynthesis clusters protein Y</fullName>
    </alternativeName>
</protein>
<sequence>MQSSLLGRMTGVTGSRSKRHTKFRLRRLQQPPTESTTRLASPDDAQPIEETKSQEHLEQSATQGLSEASGDNNAGGAHPTPAPNEGDAPTVAELQHGSNDRVDDGTSGSGTVSGWKLAAVLIGLSLAVFCMSLDSTVLSTAIPKITAEFNSLHDMAWYVSAYNLTISSFSLVYGKIYSLYRVKWVYLTTLFLFEAGSLVCGAAPSSLALIIGRAIAGVGGAGVFLGSMLIVHEIMPLHQVPLFIALISGLYGIASVVGPLLGGVFTDYVSWRWCFYINLPIGGLTAFIIVLFVRPRVREKATVKKTPWAQLLDLDPLGIILILPAVMCMLLVLQWGGAKYAWSNWRIIVLLVMAGSLALTFTAVQLWQGERATIPPRIVRNRSVWGAIAFSVCIYGSFTVFTYYLPIWFQAIKSVSATRSGVMNLPMILGVVVCSMLSGWGVSRVGYYVPFMYMAPVVGSIGAGLLTTLHVFSGPAAWITYQLLLGVGIGSGMALPLVAVQTALPTDDVSTGSAIITFTQSLSGALFNFVAQSVFQSRLVHNLNAALPGVDTARVADVSPREIRNAIEPEYLPQTLEAYSLAITQVFYAGTALCTLALFGVLPIKCLSVKGSRIPPMAHA</sequence>
<evidence type="ECO:0000255" key="1"/>
<evidence type="ECO:0000256" key="2">
    <source>
        <dbReference type="SAM" id="MobiDB-lite"/>
    </source>
</evidence>
<evidence type="ECO:0000269" key="3">
    <source>
    </source>
</evidence>
<evidence type="ECO:0000303" key="4">
    <source>
    </source>
</evidence>
<evidence type="ECO:0000305" key="5"/>
<evidence type="ECO:0000305" key="6">
    <source>
    </source>
</evidence>
<proteinExistence type="inferred from homology"/>
<keyword id="KW-0472">Membrane</keyword>
<keyword id="KW-1185">Reference proteome</keyword>
<keyword id="KW-0812">Transmembrane</keyword>
<keyword id="KW-1133">Transmembrane helix</keyword>
<keyword id="KW-0813">Transport</keyword>
<reference key="1">
    <citation type="journal article" date="2005" name="Nature">
        <title>Sequencing of Aspergillus nidulans and comparative analysis with A. fumigatus and A. oryzae.</title>
        <authorList>
            <person name="Galagan J.E."/>
            <person name="Calvo S.E."/>
            <person name="Cuomo C."/>
            <person name="Ma L.-J."/>
            <person name="Wortman J.R."/>
            <person name="Batzoglou S."/>
            <person name="Lee S.-I."/>
            <person name="Bastuerkmen M."/>
            <person name="Spevak C.C."/>
            <person name="Clutterbuck J."/>
            <person name="Kapitonov V."/>
            <person name="Jurka J."/>
            <person name="Scazzocchio C."/>
            <person name="Farman M.L."/>
            <person name="Butler J."/>
            <person name="Purcell S."/>
            <person name="Harris S."/>
            <person name="Braus G.H."/>
            <person name="Draht O."/>
            <person name="Busch S."/>
            <person name="D'Enfert C."/>
            <person name="Bouchier C."/>
            <person name="Goldman G.H."/>
            <person name="Bell-Pedersen D."/>
            <person name="Griffiths-Jones S."/>
            <person name="Doonan J.H."/>
            <person name="Yu J."/>
            <person name="Vienken K."/>
            <person name="Pain A."/>
            <person name="Freitag M."/>
            <person name="Selker E.U."/>
            <person name="Archer D.B."/>
            <person name="Penalva M.A."/>
            <person name="Oakley B.R."/>
            <person name="Momany M."/>
            <person name="Tanaka T."/>
            <person name="Kumagai T."/>
            <person name="Asai K."/>
            <person name="Machida M."/>
            <person name="Nierman W.C."/>
            <person name="Denning D.W."/>
            <person name="Caddick M.X."/>
            <person name="Hynes M."/>
            <person name="Paoletti M."/>
            <person name="Fischer R."/>
            <person name="Miller B.L."/>
            <person name="Dyer P.S."/>
            <person name="Sachs M.S."/>
            <person name="Osmani S.A."/>
            <person name="Birren B.W."/>
        </authorList>
    </citation>
    <scope>NUCLEOTIDE SEQUENCE [LARGE SCALE GENOMIC DNA]</scope>
    <source>
        <strain>FGSC A4 / ATCC 38163 / CBS 112.46 / NRRL 194 / M139</strain>
    </source>
</reference>
<reference key="2">
    <citation type="journal article" date="2009" name="Fungal Genet. Biol.">
        <title>The 2008 update of the Aspergillus nidulans genome annotation: a community effort.</title>
        <authorList>
            <person name="Wortman J.R."/>
            <person name="Gilsenan J.M."/>
            <person name="Joardar V."/>
            <person name="Deegan J."/>
            <person name="Clutterbuck J."/>
            <person name="Andersen M.R."/>
            <person name="Archer D."/>
            <person name="Bencina M."/>
            <person name="Braus G."/>
            <person name="Coutinho P."/>
            <person name="von Dohren H."/>
            <person name="Doonan J."/>
            <person name="Driessen A.J."/>
            <person name="Durek P."/>
            <person name="Espeso E."/>
            <person name="Fekete E."/>
            <person name="Flipphi M."/>
            <person name="Estrada C.G."/>
            <person name="Geysens S."/>
            <person name="Goldman G."/>
            <person name="de Groot P.W."/>
            <person name="Hansen K."/>
            <person name="Harris S.D."/>
            <person name="Heinekamp T."/>
            <person name="Helmstaedt K."/>
            <person name="Henrissat B."/>
            <person name="Hofmann G."/>
            <person name="Homan T."/>
            <person name="Horio T."/>
            <person name="Horiuchi H."/>
            <person name="James S."/>
            <person name="Jones M."/>
            <person name="Karaffa L."/>
            <person name="Karanyi Z."/>
            <person name="Kato M."/>
            <person name="Keller N."/>
            <person name="Kelly D.E."/>
            <person name="Kiel J.A."/>
            <person name="Kim J.M."/>
            <person name="van der Klei I.J."/>
            <person name="Klis F.M."/>
            <person name="Kovalchuk A."/>
            <person name="Krasevec N."/>
            <person name="Kubicek C.P."/>
            <person name="Liu B."/>
            <person name="Maccabe A."/>
            <person name="Meyer V."/>
            <person name="Mirabito P."/>
            <person name="Miskei M."/>
            <person name="Mos M."/>
            <person name="Mullins J."/>
            <person name="Nelson D.R."/>
            <person name="Nielsen J."/>
            <person name="Oakley B.R."/>
            <person name="Osmani S.A."/>
            <person name="Pakula T."/>
            <person name="Paszewski A."/>
            <person name="Paulsen I."/>
            <person name="Pilsyk S."/>
            <person name="Pocsi I."/>
            <person name="Punt P.J."/>
            <person name="Ram A.F."/>
            <person name="Ren Q."/>
            <person name="Robellet X."/>
            <person name="Robson G."/>
            <person name="Seiboth B."/>
            <person name="van Solingen P."/>
            <person name="Specht T."/>
            <person name="Sun J."/>
            <person name="Taheri-Talesh N."/>
            <person name="Takeshita N."/>
            <person name="Ussery D."/>
            <person name="vanKuyk P.A."/>
            <person name="Visser H."/>
            <person name="van de Vondervoort P.J."/>
            <person name="de Vries R.P."/>
            <person name="Walton J."/>
            <person name="Xiang X."/>
            <person name="Xiong Y."/>
            <person name="Zeng A.P."/>
            <person name="Brandt B.W."/>
            <person name="Cornell M.J."/>
            <person name="van den Hondel C.A."/>
            <person name="Visser J."/>
            <person name="Oliver S.G."/>
            <person name="Turner G."/>
        </authorList>
    </citation>
    <scope>GENOME REANNOTATION</scope>
    <source>
        <strain>FGSC A4 / ATCC 38163 / CBS 112.46 / NRRL 194 / M139</strain>
    </source>
</reference>
<reference key="3">
    <citation type="journal article" date="2017" name="ACS Chem. Biol.">
        <title>Rewiring of the austinoid biosynthetic pathway in filamentous fungi.</title>
        <authorList>
            <person name="Mattern D.J."/>
            <person name="Valiante V."/>
            <person name="Horn F."/>
            <person name="Petzke L."/>
            <person name="Brakhage A.A."/>
        </authorList>
    </citation>
    <scope>FUNCTION</scope>
</reference>
<dbReference type="EMBL" id="BN001308">
    <property type="protein sequence ID" value="CBF87265.1"/>
    <property type="molecule type" value="Genomic_DNA"/>
</dbReference>
<dbReference type="SMR" id="C8VQ97"/>
<dbReference type="FunCoup" id="C8VQ97">
    <property type="interactions" value="68"/>
</dbReference>
<dbReference type="STRING" id="227321.C8VQ97"/>
<dbReference type="EnsemblFungi" id="CBF87265">
    <property type="protein sequence ID" value="CBF87265"/>
    <property type="gene ID" value="ANIA_11217"/>
</dbReference>
<dbReference type="VEuPathDB" id="FungiDB:AN11217"/>
<dbReference type="eggNOG" id="KOG0254">
    <property type="taxonomic scope" value="Eukaryota"/>
</dbReference>
<dbReference type="HOGENOM" id="CLU_000960_22_1_1"/>
<dbReference type="InParanoid" id="C8VQ97"/>
<dbReference type="OMA" id="YNTAITQ"/>
<dbReference type="OrthoDB" id="10021397at2759"/>
<dbReference type="Proteomes" id="UP000000560">
    <property type="component" value="Chromosome VIII"/>
</dbReference>
<dbReference type="GO" id="GO:0005886">
    <property type="term" value="C:plasma membrane"/>
    <property type="evidence" value="ECO:0000318"/>
    <property type="project" value="GO_Central"/>
</dbReference>
<dbReference type="GO" id="GO:0022857">
    <property type="term" value="F:transmembrane transporter activity"/>
    <property type="evidence" value="ECO:0000318"/>
    <property type="project" value="GO_Central"/>
</dbReference>
<dbReference type="GO" id="GO:0055085">
    <property type="term" value="P:transmembrane transport"/>
    <property type="evidence" value="ECO:0000318"/>
    <property type="project" value="GO_Central"/>
</dbReference>
<dbReference type="CDD" id="cd17502">
    <property type="entry name" value="MFS_Azr1_MDR_like"/>
    <property type="match status" value="1"/>
</dbReference>
<dbReference type="FunFam" id="1.20.1250.20:FF:000196">
    <property type="entry name" value="MFS toxin efflux pump (AflT)"/>
    <property type="match status" value="1"/>
</dbReference>
<dbReference type="FunFam" id="1.20.1720.10:FF:000012">
    <property type="entry name" value="MFS toxin efflux pump (AflT)"/>
    <property type="match status" value="1"/>
</dbReference>
<dbReference type="Gene3D" id="1.20.1250.20">
    <property type="entry name" value="MFS general substrate transporter like domains"/>
    <property type="match status" value="1"/>
</dbReference>
<dbReference type="Gene3D" id="1.20.1720.10">
    <property type="entry name" value="Multidrug resistance protein D"/>
    <property type="match status" value="1"/>
</dbReference>
<dbReference type="InterPro" id="IPR011701">
    <property type="entry name" value="MFS"/>
</dbReference>
<dbReference type="InterPro" id="IPR020846">
    <property type="entry name" value="MFS_dom"/>
</dbReference>
<dbReference type="InterPro" id="IPR036259">
    <property type="entry name" value="MFS_trans_sf"/>
</dbReference>
<dbReference type="PANTHER" id="PTHR23501">
    <property type="entry name" value="MAJOR FACILITATOR SUPERFAMILY"/>
    <property type="match status" value="1"/>
</dbReference>
<dbReference type="PANTHER" id="PTHR23501:SF199">
    <property type="entry name" value="MFS EFFLUX TRANSPORTER INPD-RELATED"/>
    <property type="match status" value="1"/>
</dbReference>
<dbReference type="Pfam" id="PF07690">
    <property type="entry name" value="MFS_1"/>
    <property type="match status" value="1"/>
</dbReference>
<dbReference type="SUPFAM" id="SSF103473">
    <property type="entry name" value="MFS general substrate transporter"/>
    <property type="match status" value="1"/>
</dbReference>
<dbReference type="PROSITE" id="PS50850">
    <property type="entry name" value="MFS"/>
    <property type="match status" value="1"/>
</dbReference>
<feature type="chain" id="PRO_0000453875" description="MFS-type transporter ausY">
    <location>
        <begin position="1"/>
        <end position="620"/>
    </location>
</feature>
<feature type="transmembrane region" description="Helical" evidence="1">
    <location>
        <begin position="117"/>
        <end position="137"/>
    </location>
</feature>
<feature type="transmembrane region" description="Helical" evidence="1">
    <location>
        <begin position="157"/>
        <end position="179"/>
    </location>
</feature>
<feature type="transmembrane region" description="Helical" evidence="1">
    <location>
        <begin position="191"/>
        <end position="211"/>
    </location>
</feature>
<feature type="transmembrane region" description="Helical" evidence="1">
    <location>
        <begin position="215"/>
        <end position="235"/>
    </location>
</feature>
<feature type="transmembrane region" description="Helical" evidence="1">
    <location>
        <begin position="242"/>
        <end position="262"/>
    </location>
</feature>
<feature type="transmembrane region" description="Helical" evidence="1">
    <location>
        <begin position="273"/>
        <end position="293"/>
    </location>
</feature>
<feature type="transmembrane region" description="Helical" evidence="1">
    <location>
        <begin position="317"/>
        <end position="337"/>
    </location>
</feature>
<feature type="transmembrane region" description="Helical" evidence="1">
    <location>
        <begin position="347"/>
        <end position="367"/>
    </location>
</feature>
<feature type="transmembrane region" description="Helical" evidence="1">
    <location>
        <begin position="388"/>
        <end position="408"/>
    </location>
</feature>
<feature type="transmembrane region" description="Helical" evidence="1">
    <location>
        <begin position="422"/>
        <end position="442"/>
    </location>
</feature>
<feature type="transmembrane region" description="Helical" evidence="1">
    <location>
        <begin position="445"/>
        <end position="465"/>
    </location>
</feature>
<feature type="transmembrane region" description="Helical" evidence="1">
    <location>
        <begin position="478"/>
        <end position="498"/>
    </location>
</feature>
<feature type="transmembrane region" description="Helical" evidence="1">
    <location>
        <begin position="515"/>
        <end position="535"/>
    </location>
</feature>
<feature type="transmembrane region" description="Helical" evidence="1">
    <location>
        <begin position="581"/>
        <end position="601"/>
    </location>
</feature>
<feature type="region of interest" description="Disordered" evidence="2">
    <location>
        <begin position="1"/>
        <end position="107"/>
    </location>
</feature>
<feature type="compositionally biased region" description="Basic residues" evidence="2">
    <location>
        <begin position="16"/>
        <end position="27"/>
    </location>
</feature>
<feature type="compositionally biased region" description="Polar residues" evidence="2">
    <location>
        <begin position="30"/>
        <end position="39"/>
    </location>
</feature>
<feature type="compositionally biased region" description="Basic and acidic residues" evidence="2">
    <location>
        <begin position="49"/>
        <end position="58"/>
    </location>
</feature>
<feature type="compositionally biased region" description="Polar residues" evidence="2">
    <location>
        <begin position="59"/>
        <end position="72"/>
    </location>
</feature>
<organism>
    <name type="scientific">Emericella nidulans (strain FGSC A4 / ATCC 38163 / CBS 112.46 / NRRL 194 / M139)</name>
    <name type="common">Aspergillus nidulans</name>
    <dbReference type="NCBI Taxonomy" id="227321"/>
    <lineage>
        <taxon>Eukaryota</taxon>
        <taxon>Fungi</taxon>
        <taxon>Dikarya</taxon>
        <taxon>Ascomycota</taxon>
        <taxon>Pezizomycotina</taxon>
        <taxon>Eurotiomycetes</taxon>
        <taxon>Eurotiomycetidae</taxon>
        <taxon>Eurotiales</taxon>
        <taxon>Aspergillaceae</taxon>
        <taxon>Aspergillus</taxon>
        <taxon>Aspergillus subgen. Nidulantes</taxon>
    </lineage>
</organism>
<gene>
    <name evidence="4" type="primary">ausY</name>
    <name type="ORF">ANIA_11217</name>
</gene>
<name>AUSY_EMENI</name>